<proteinExistence type="evidence at protein level"/>
<protein>
    <recommendedName>
        <fullName>Phosphoribosylaminoimidazole-succinocarboxamide synthase</fullName>
        <ecNumber>6.3.2.6</ecNumber>
    </recommendedName>
    <alternativeName>
        <fullName>SAICAR synthetase</fullName>
    </alternativeName>
</protein>
<name>PUR7_MYCTU</name>
<feature type="chain" id="PRO_0000100843" description="Phosphoribosylaminoimidazole-succinocarboxamide synthase">
    <location>
        <begin position="1"/>
        <end position="297"/>
    </location>
</feature>
<feature type="sequence conflict" description="In Ref. 1; AAB41456." evidence="1" ref="1">
    <original>A</original>
    <variation>R</variation>
    <location>
        <position position="124"/>
    </location>
</feature>
<feature type="sequence conflict" description="In Ref. 1; AAB41456." evidence="1" ref="1">
    <original>A</original>
    <variation>P</variation>
    <location>
        <position position="166"/>
    </location>
</feature>
<organism>
    <name type="scientific">Mycobacterium tuberculosis (strain ATCC 25618 / H37Rv)</name>
    <dbReference type="NCBI Taxonomy" id="83332"/>
    <lineage>
        <taxon>Bacteria</taxon>
        <taxon>Bacillati</taxon>
        <taxon>Actinomycetota</taxon>
        <taxon>Actinomycetes</taxon>
        <taxon>Mycobacteriales</taxon>
        <taxon>Mycobacteriaceae</taxon>
        <taxon>Mycobacterium</taxon>
        <taxon>Mycobacterium tuberculosis complex</taxon>
    </lineage>
</organism>
<evidence type="ECO:0000305" key="1"/>
<dbReference type="EC" id="6.3.2.6"/>
<dbReference type="EMBL" id="U34957">
    <property type="protein sequence ID" value="AAB41456.1"/>
    <property type="molecule type" value="Genomic_DNA"/>
</dbReference>
<dbReference type="EMBL" id="AL123456">
    <property type="protein sequence ID" value="CCP43527.1"/>
    <property type="molecule type" value="Genomic_DNA"/>
</dbReference>
<dbReference type="PIR" id="G70708">
    <property type="entry name" value="G70708"/>
</dbReference>
<dbReference type="RefSeq" id="NP_215294.1">
    <property type="nucleotide sequence ID" value="NC_000962.3"/>
</dbReference>
<dbReference type="RefSeq" id="WP_003403962.1">
    <property type="nucleotide sequence ID" value="NZ_NVQJ01000035.1"/>
</dbReference>
<dbReference type="SMR" id="P9WHN1"/>
<dbReference type="FunCoup" id="P9WHN1">
    <property type="interactions" value="338"/>
</dbReference>
<dbReference type="STRING" id="83332.Rv0780"/>
<dbReference type="PaxDb" id="83332-Rv0780"/>
<dbReference type="DNASU" id="888928"/>
<dbReference type="GeneID" id="888928"/>
<dbReference type="KEGG" id="mtu:Rv0780"/>
<dbReference type="KEGG" id="mtv:RVBD_0780"/>
<dbReference type="TubercuList" id="Rv0780"/>
<dbReference type="eggNOG" id="COG0152">
    <property type="taxonomic scope" value="Bacteria"/>
</dbReference>
<dbReference type="InParanoid" id="P9WHN1"/>
<dbReference type="OrthoDB" id="9801549at2"/>
<dbReference type="PhylomeDB" id="P9WHN1"/>
<dbReference type="UniPathway" id="UPA00074">
    <property type="reaction ID" value="UER00131"/>
</dbReference>
<dbReference type="Proteomes" id="UP000001584">
    <property type="component" value="Chromosome"/>
</dbReference>
<dbReference type="GO" id="GO:0005524">
    <property type="term" value="F:ATP binding"/>
    <property type="evidence" value="ECO:0007669"/>
    <property type="project" value="UniProtKB-KW"/>
</dbReference>
<dbReference type="GO" id="GO:0004639">
    <property type="term" value="F:phosphoribosylaminoimidazolesuccinocarboxamide synthase activity"/>
    <property type="evidence" value="ECO:0000318"/>
    <property type="project" value="GO_Central"/>
</dbReference>
<dbReference type="GO" id="GO:0006189">
    <property type="term" value="P:'de novo' IMP biosynthetic process"/>
    <property type="evidence" value="ECO:0000318"/>
    <property type="project" value="GO_Central"/>
</dbReference>
<dbReference type="GO" id="GO:0006164">
    <property type="term" value="P:purine nucleotide biosynthetic process"/>
    <property type="evidence" value="ECO:0000315"/>
    <property type="project" value="MTBBASE"/>
</dbReference>
<dbReference type="CDD" id="cd01414">
    <property type="entry name" value="SAICAR_synt_Sc"/>
    <property type="match status" value="1"/>
</dbReference>
<dbReference type="FunFam" id="3.30.200.20:FF:000199">
    <property type="entry name" value="Phosphoribosylaminoimidazole-succinocarboxamide synthase"/>
    <property type="match status" value="1"/>
</dbReference>
<dbReference type="FunFam" id="3.30.470.20:FF:000015">
    <property type="entry name" value="Phosphoribosylaminoimidazole-succinocarboxamide synthase"/>
    <property type="match status" value="1"/>
</dbReference>
<dbReference type="Gene3D" id="3.30.470.20">
    <property type="entry name" value="ATP-grasp fold, B domain"/>
    <property type="match status" value="1"/>
</dbReference>
<dbReference type="Gene3D" id="3.30.200.20">
    <property type="entry name" value="Phosphorylase Kinase, domain 1"/>
    <property type="match status" value="1"/>
</dbReference>
<dbReference type="HAMAP" id="MF_00137">
    <property type="entry name" value="SAICAR_synth"/>
    <property type="match status" value="1"/>
</dbReference>
<dbReference type="InterPro" id="IPR028923">
    <property type="entry name" value="SAICAR_synt/ADE2_N"/>
</dbReference>
<dbReference type="InterPro" id="IPR001636">
    <property type="entry name" value="SAICAR_synth"/>
</dbReference>
<dbReference type="InterPro" id="IPR018236">
    <property type="entry name" value="SAICAR_synthetase_CS"/>
</dbReference>
<dbReference type="NCBIfam" id="NF010568">
    <property type="entry name" value="PRK13961.1"/>
    <property type="match status" value="1"/>
</dbReference>
<dbReference type="NCBIfam" id="TIGR00081">
    <property type="entry name" value="purC"/>
    <property type="match status" value="1"/>
</dbReference>
<dbReference type="PANTHER" id="PTHR43700">
    <property type="entry name" value="PHOSPHORIBOSYLAMINOIMIDAZOLE-SUCCINOCARBOXAMIDE SYNTHASE"/>
    <property type="match status" value="1"/>
</dbReference>
<dbReference type="PANTHER" id="PTHR43700:SF1">
    <property type="entry name" value="PHOSPHORIBOSYLAMINOIMIDAZOLE-SUCCINOCARBOXAMIDE SYNTHASE"/>
    <property type="match status" value="1"/>
</dbReference>
<dbReference type="Pfam" id="PF01259">
    <property type="entry name" value="SAICAR_synt"/>
    <property type="match status" value="1"/>
</dbReference>
<dbReference type="SUPFAM" id="SSF56104">
    <property type="entry name" value="SAICAR synthase-like"/>
    <property type="match status" value="1"/>
</dbReference>
<dbReference type="PROSITE" id="PS01057">
    <property type="entry name" value="SAICAR_SYNTHETASE_1"/>
    <property type="match status" value="1"/>
</dbReference>
<dbReference type="PROSITE" id="PS01058">
    <property type="entry name" value="SAICAR_SYNTHETASE_2"/>
    <property type="match status" value="1"/>
</dbReference>
<reference key="1">
    <citation type="journal article" date="1996" name="Microbiology">
        <title>The Mycobacterium tuberculosis purine biosynthetic pathway: isolation and characterization of the purC and purL genes.</title>
        <authorList>
            <person name="Jackson M."/>
            <person name="Berthet F.-X."/>
            <person name="Otal I."/>
            <person name="Rauzier J."/>
            <person name="Martin C."/>
            <person name="Gicquel B."/>
            <person name="Guilhot C."/>
        </authorList>
    </citation>
    <scope>NUCLEOTIDE SEQUENCE [GENOMIC DNA]</scope>
    <source>
        <strain>ATCC 25618 / H37Rv</strain>
    </source>
</reference>
<reference key="2">
    <citation type="journal article" date="1998" name="Nature">
        <title>Deciphering the biology of Mycobacterium tuberculosis from the complete genome sequence.</title>
        <authorList>
            <person name="Cole S.T."/>
            <person name="Brosch R."/>
            <person name="Parkhill J."/>
            <person name="Garnier T."/>
            <person name="Churcher C.M."/>
            <person name="Harris D.E."/>
            <person name="Gordon S.V."/>
            <person name="Eiglmeier K."/>
            <person name="Gas S."/>
            <person name="Barry C.E. III"/>
            <person name="Tekaia F."/>
            <person name="Badcock K."/>
            <person name="Basham D."/>
            <person name="Brown D."/>
            <person name="Chillingworth T."/>
            <person name="Connor R."/>
            <person name="Davies R.M."/>
            <person name="Devlin K."/>
            <person name="Feltwell T."/>
            <person name="Gentles S."/>
            <person name="Hamlin N."/>
            <person name="Holroyd S."/>
            <person name="Hornsby T."/>
            <person name="Jagels K."/>
            <person name="Krogh A."/>
            <person name="McLean J."/>
            <person name="Moule S."/>
            <person name="Murphy L.D."/>
            <person name="Oliver S."/>
            <person name="Osborne J."/>
            <person name="Quail M.A."/>
            <person name="Rajandream M.A."/>
            <person name="Rogers J."/>
            <person name="Rutter S."/>
            <person name="Seeger K."/>
            <person name="Skelton S."/>
            <person name="Squares S."/>
            <person name="Squares R."/>
            <person name="Sulston J.E."/>
            <person name="Taylor K."/>
            <person name="Whitehead S."/>
            <person name="Barrell B.G."/>
        </authorList>
    </citation>
    <scope>NUCLEOTIDE SEQUENCE [LARGE SCALE GENOMIC DNA]</scope>
    <source>
        <strain>ATCC 25618 / H37Rv</strain>
    </source>
</reference>
<reference key="3">
    <citation type="journal article" date="2011" name="Mol. Cell. Proteomics">
        <title>Proteogenomic analysis of Mycobacterium tuberculosis by high resolution mass spectrometry.</title>
        <authorList>
            <person name="Kelkar D.S."/>
            <person name="Kumar D."/>
            <person name="Kumar P."/>
            <person name="Balakrishnan L."/>
            <person name="Muthusamy B."/>
            <person name="Yadav A.K."/>
            <person name="Shrivastava P."/>
            <person name="Marimuthu A."/>
            <person name="Anand S."/>
            <person name="Sundaram H."/>
            <person name="Kingsbury R."/>
            <person name="Harsha H.C."/>
            <person name="Nair B."/>
            <person name="Prasad T.S."/>
            <person name="Chauhan D.S."/>
            <person name="Katoch K."/>
            <person name="Katoch V.M."/>
            <person name="Kumar P."/>
            <person name="Chaerkady R."/>
            <person name="Ramachandran S."/>
            <person name="Dash D."/>
            <person name="Pandey A."/>
        </authorList>
    </citation>
    <scope>IDENTIFICATION BY MASS SPECTROMETRY [LARGE SCALE ANALYSIS]</scope>
    <source>
        <strain>ATCC 25618 / H37Rv</strain>
    </source>
</reference>
<sequence length="297" mass="32930">MRPALSDYQHVASGKVREIYRVDDEHLLLVASDRISAYDYVLDSTIPDKGRVLTAMSAFFFGLVDAPNHLAGPPDDPRIPDEVLGRALVVRRLEMLPVECVARGYLTGSGLLDYQATGKVCGIALPPGLVEASRFATPLFTPATKAALGDHDENISFDRVVEMVGALRANQLRDRTLQTYVQAADHALTRGIIIADTKFEFGIDRHGNLLLADEIFTPDSSRYWPADDYRAGVVQTSFDKQFVRSWLTGSESGWDRGSDRPPPPLPEHIVEATRARYINAYERISELKFDDWIGPGA</sequence>
<gene>
    <name type="primary">purC</name>
    <name type="ordered locus">Rv0780</name>
    <name type="ORF">MTCY369.24</name>
</gene>
<accession>P9WHN1</accession>
<accession>L0T7P9</accession>
<accession>P0A5T4</accession>
<accession>P77904</accession>
<accession>Q59566</accession>
<keyword id="KW-0067">ATP-binding</keyword>
<keyword id="KW-0436">Ligase</keyword>
<keyword id="KW-0547">Nucleotide-binding</keyword>
<keyword id="KW-0658">Purine biosynthesis</keyword>
<keyword id="KW-1185">Reference proteome</keyword>
<comment type="catalytic activity">
    <reaction>
        <text>5-amino-1-(5-phospho-D-ribosyl)imidazole-4-carboxylate + L-aspartate + ATP = (2S)-2-[5-amino-1-(5-phospho-beta-D-ribosyl)imidazole-4-carboxamido]succinate + ADP + phosphate + 2 H(+)</text>
        <dbReference type="Rhea" id="RHEA:22628"/>
        <dbReference type="ChEBI" id="CHEBI:15378"/>
        <dbReference type="ChEBI" id="CHEBI:29991"/>
        <dbReference type="ChEBI" id="CHEBI:30616"/>
        <dbReference type="ChEBI" id="CHEBI:43474"/>
        <dbReference type="ChEBI" id="CHEBI:58443"/>
        <dbReference type="ChEBI" id="CHEBI:77657"/>
        <dbReference type="ChEBI" id="CHEBI:456216"/>
        <dbReference type="EC" id="6.3.2.6"/>
    </reaction>
</comment>
<comment type="pathway">
    <text>Purine metabolism; IMP biosynthesis via de novo pathway; 5-amino-1-(5-phospho-D-ribosyl)imidazole-4-carboxamide from 5-amino-1-(5-phospho-D-ribosyl)imidazole-4-carboxylate: step 1/2.</text>
</comment>
<comment type="similarity">
    <text evidence="1">Belongs to the SAICAR synthetase family.</text>
</comment>